<gene>
    <name type="ORF">ORF32</name>
</gene>
<keyword id="KW-0597">Phosphoprotein</keyword>
<name>ORF32_VZVO</name>
<protein>
    <recommendedName>
        <fullName>Phosphoprotein 32</fullName>
    </recommendedName>
    <alternativeName>
        <fullName>ORF32 Phosphoprotein</fullName>
    </alternativeName>
</protein>
<proteinExistence type="evidence at protein level"/>
<accession>Q4JQU3</accession>
<dbReference type="EMBL" id="AB097932">
    <property type="status" value="NOT_ANNOTATED_CDS"/>
    <property type="molecule type" value="Genomic_DNA"/>
</dbReference>
<dbReference type="EMBL" id="AB097933">
    <property type="status" value="NOT_ANNOTATED_CDS"/>
    <property type="molecule type" value="Genomic_DNA"/>
</dbReference>
<dbReference type="EMBL" id="DQ008354">
    <property type="protein sequence ID" value="AAY57645.1"/>
    <property type="molecule type" value="Genomic_DNA"/>
</dbReference>
<dbReference type="EMBL" id="DQ008355">
    <property type="protein sequence ID" value="AAY57716.1"/>
    <property type="molecule type" value="Genomic_DNA"/>
</dbReference>
<dbReference type="RefSeq" id="NP_040155.1">
    <property type="nucleotide sequence ID" value="NC_001348.1"/>
</dbReference>
<dbReference type="SMR" id="Q4JQU3"/>
<dbReference type="IntAct" id="Q4JQU3">
    <property type="interactions" value="6"/>
</dbReference>
<dbReference type="GeneID" id="1487663"/>
<dbReference type="KEGG" id="vg:1487663"/>
<dbReference type="Proteomes" id="UP000002603">
    <property type="component" value="Genome"/>
</dbReference>
<dbReference type="Proteomes" id="UP000008504">
    <property type="component" value="Genome"/>
</dbReference>
<dbReference type="Proteomes" id="UP000008505">
    <property type="component" value="Genome"/>
</dbReference>
<dbReference type="Proteomes" id="UP000008506">
    <property type="component" value="Genome"/>
</dbReference>
<evidence type="ECO:0000256" key="1">
    <source>
        <dbReference type="SAM" id="MobiDB-lite"/>
    </source>
</evidence>
<evidence type="ECO:0000269" key="2">
    <source>
    </source>
</evidence>
<evidence type="ECO:0000305" key="3"/>
<reference key="1">
    <citation type="journal article" date="2002" name="J. Virol.">
        <title>Comparison of the complete DNA sequences of the Oka varicella vaccine and its parental virus.</title>
        <authorList>
            <person name="Gomi Y."/>
            <person name="Sunamachi H."/>
            <person name="Mori Y."/>
            <person name="Nagaike K."/>
            <person name="Takahashi M."/>
            <person name="Yamanishi K."/>
        </authorList>
    </citation>
    <scope>NUCLEOTIDE SEQUENCE [LARGE SCALE GENOMIC DNA]</scope>
    <source>
        <strain>Isolate Human/Japan/P-Oka/1970</strain>
        <strain>Oka varicella vaccine Biken (V-Oka-Biken)</strain>
    </source>
</reference>
<reference key="2">
    <citation type="journal article" date="2008" name="J. Virol.">
        <title>Complete DNA sequences of two oka strain varicella-zoster virus genomes.</title>
        <authorList>
            <person name="Tillieux S.L."/>
            <person name="Halsey W.S."/>
            <person name="Thomas E.S."/>
            <person name="Voycik J.J."/>
            <person name="Sathe G.M."/>
            <person name="Vassilev V."/>
        </authorList>
    </citation>
    <scope>NUCLEOTIDE SEQUENCE [LARGE SCALE GENOMIC DNA]</scope>
    <source>
        <strain>Oka varicella vaccine VarilRix (V-Oka-GSK)</strain>
        <strain>Oka varicella vaccine Varivax (V-Oka-Merck)</strain>
    </source>
</reference>
<reference key="3">
    <citation type="journal article" date="1998" name="J. Virol.">
        <title>Varicella-zoster virus (VZV) ORF32 encodes a phosphoprotein that is posttranslationally modified by the VZV ORF47 protein kinase.</title>
        <authorList>
            <person name="Reddy S.M."/>
            <person name="Cox E."/>
            <person name="Iofin I."/>
            <person name="Soong W."/>
            <person name="Cohen J.I."/>
        </authorList>
    </citation>
    <scope>PHOSPHORYLATION</scope>
</reference>
<organismHost>
    <name type="scientific">Homo sapiens</name>
    <name type="common">Human</name>
    <dbReference type="NCBI Taxonomy" id="9606"/>
</organismHost>
<sequence>MESSNINALQQPSSIAHHPSKQCASSLNETVKDSPPAIYEDRLEHTPVQLPRDGTPRDVCSVGQLTCRACATKPFRLNRDSQYDYLNTCPGGRHISLALEIITGRWVCIPRVFPDTPEEKWMAPYIIPDREQPSSGDEDSDTD</sequence>
<feature type="chain" id="PRO_0000385145" description="Phosphoprotein 32">
    <location>
        <begin position="1"/>
        <end position="143"/>
    </location>
</feature>
<feature type="region of interest" description="Disordered" evidence="1">
    <location>
        <begin position="1"/>
        <end position="32"/>
    </location>
</feature>
<feature type="compositionally biased region" description="Polar residues" evidence="1">
    <location>
        <begin position="1"/>
        <end position="14"/>
    </location>
</feature>
<comment type="PTM">
    <text evidence="2">Phosphorylated by ORF47 protein.</text>
</comment>
<comment type="similarity">
    <text evidence="3">Belongs to the varicellovirus ORF32 protein family.</text>
</comment>
<organism>
    <name type="scientific">Varicella-zoster virus (strain Oka vaccine)</name>
    <name type="common">HHV-3</name>
    <name type="synonym">Human herpesvirus 3</name>
    <dbReference type="NCBI Taxonomy" id="341980"/>
    <lineage>
        <taxon>Viruses</taxon>
        <taxon>Duplodnaviria</taxon>
        <taxon>Heunggongvirae</taxon>
        <taxon>Peploviricota</taxon>
        <taxon>Herviviricetes</taxon>
        <taxon>Herpesvirales</taxon>
        <taxon>Orthoherpesviridae</taxon>
        <taxon>Alphaherpesvirinae</taxon>
        <taxon>Varicellovirus</taxon>
        <taxon>Varicellovirus humanalpha3</taxon>
        <taxon>Human herpesvirus 3</taxon>
    </lineage>
</organism>